<feature type="chain" id="PRO_0000169721" description="Guanine/hypoxanthine permease GhxP">
    <location>
        <begin position="1"/>
        <end position="449"/>
    </location>
</feature>
<feature type="topological domain" description="Cytoplasmic" evidence="2">
    <location>
        <begin position="1"/>
        <end position="25"/>
    </location>
</feature>
<feature type="transmembrane region" description="Helical" evidence="2">
    <location>
        <begin position="26"/>
        <end position="49"/>
    </location>
</feature>
<feature type="topological domain" description="Periplasmic" evidence="2">
    <location>
        <begin position="50"/>
        <end position="59"/>
    </location>
</feature>
<feature type="transmembrane region" description="Helical" evidence="2">
    <location>
        <begin position="60"/>
        <end position="78"/>
    </location>
</feature>
<feature type="topological domain" description="Cytoplasmic" evidence="2">
    <location>
        <begin position="79"/>
        <end position="80"/>
    </location>
</feature>
<feature type="transmembrane region" description="Discontinuously helical" evidence="2">
    <location>
        <begin position="81"/>
        <end position="97"/>
    </location>
</feature>
<feature type="topological domain" description="Periplasmic" evidence="2">
    <location>
        <begin position="98"/>
        <end position="109"/>
    </location>
</feature>
<feature type="transmembrane region" description="Helical" evidence="2">
    <location>
        <begin position="110"/>
        <end position="129"/>
    </location>
</feature>
<feature type="topological domain" description="Cytoplasmic" evidence="2">
    <location>
        <begin position="130"/>
        <end position="141"/>
    </location>
</feature>
<feature type="transmembrane region" description="Helical" evidence="2">
    <location>
        <begin position="142"/>
        <end position="162"/>
    </location>
</feature>
<feature type="topological domain" description="Periplasmic" evidence="2">
    <location>
        <begin position="163"/>
        <end position="180"/>
    </location>
</feature>
<feature type="transmembrane region" description="Helical" evidence="2">
    <location>
        <begin position="181"/>
        <end position="198"/>
    </location>
</feature>
<feature type="topological domain" description="Cytoplasmic" evidence="2">
    <location>
        <begin position="199"/>
        <end position="202"/>
    </location>
</feature>
<feature type="transmembrane region" description="Helical" evidence="2">
    <location>
        <begin position="203"/>
        <end position="222"/>
    </location>
</feature>
<feature type="topological domain" description="Periplasmic" evidence="2">
    <location>
        <begin position="223"/>
        <end position="254"/>
    </location>
</feature>
<feature type="transmembrane region" description="Helical" evidence="2">
    <location>
        <begin position="255"/>
        <end position="283"/>
    </location>
</feature>
<feature type="topological domain" description="Cytoplasmic" evidence="2">
    <location>
        <begin position="284"/>
        <end position="296"/>
    </location>
</feature>
<feature type="transmembrane region" description="Helical" evidence="2">
    <location>
        <begin position="297"/>
        <end position="312"/>
    </location>
</feature>
<feature type="topological domain" description="Periplasmic" evidence="2">
    <location>
        <begin position="313"/>
        <end position="314"/>
    </location>
</feature>
<feature type="transmembrane region" description="Discontinuously helical" evidence="2">
    <location>
        <begin position="315"/>
        <end position="330"/>
    </location>
</feature>
<feature type="topological domain" description="Cytoplasmic" evidence="2">
    <location>
        <begin position="331"/>
        <end position="334"/>
    </location>
</feature>
<feature type="transmembrane region" description="Helical" evidence="2">
    <location>
        <begin position="335"/>
        <end position="349"/>
    </location>
</feature>
<feature type="topological domain" description="Periplasmic" evidence="2">
    <location>
        <begin position="350"/>
        <end position="360"/>
    </location>
</feature>
<feature type="transmembrane region" description="Helical" evidence="2">
    <location>
        <begin position="361"/>
        <end position="380"/>
    </location>
</feature>
<feature type="topological domain" description="Cytoplasmic" evidence="2">
    <location>
        <begin position="381"/>
        <end position="385"/>
    </location>
</feature>
<feature type="intramembrane region" description="Discontinuously helical" evidence="2">
    <location>
        <begin position="386"/>
        <end position="421"/>
    </location>
</feature>
<feature type="topological domain" description="Cytoplasmic" evidence="2">
    <location>
        <begin position="422"/>
        <end position="449"/>
    </location>
</feature>
<gene>
    <name type="primary">ghxP</name>
    <name type="synonym">yjcD</name>
    <name type="ordered locus">Z5663</name>
    <name type="ordered locus">ECs5046</name>
</gene>
<comment type="function">
    <text evidence="1">High-affinity transporter for guanine and hypoxanthine.</text>
</comment>
<comment type="subcellular location">
    <subcellularLocation>
        <location evidence="1">Cell inner membrane</location>
        <topology evidence="1">Multi-pass membrane protein</topology>
    </subcellularLocation>
</comment>
<comment type="similarity">
    <text evidence="3">Belongs to the nucleobase:cation symporter-2 (NCS2) (TC 2.A.40) family. Azg-like subfamily.</text>
</comment>
<organism>
    <name type="scientific">Escherichia coli O157:H7</name>
    <dbReference type="NCBI Taxonomy" id="83334"/>
    <lineage>
        <taxon>Bacteria</taxon>
        <taxon>Pseudomonadati</taxon>
        <taxon>Pseudomonadota</taxon>
        <taxon>Gammaproteobacteria</taxon>
        <taxon>Enterobacterales</taxon>
        <taxon>Enterobacteriaceae</taxon>
        <taxon>Escherichia</taxon>
    </lineage>
</organism>
<reference key="1">
    <citation type="journal article" date="2001" name="Nature">
        <title>Genome sequence of enterohaemorrhagic Escherichia coli O157:H7.</title>
        <authorList>
            <person name="Perna N.T."/>
            <person name="Plunkett G. III"/>
            <person name="Burland V."/>
            <person name="Mau B."/>
            <person name="Glasner J.D."/>
            <person name="Rose D.J."/>
            <person name="Mayhew G.F."/>
            <person name="Evans P.S."/>
            <person name="Gregor J."/>
            <person name="Kirkpatrick H.A."/>
            <person name="Posfai G."/>
            <person name="Hackett J."/>
            <person name="Klink S."/>
            <person name="Boutin A."/>
            <person name="Shao Y."/>
            <person name="Miller L."/>
            <person name="Grotbeck E.J."/>
            <person name="Davis N.W."/>
            <person name="Lim A."/>
            <person name="Dimalanta E.T."/>
            <person name="Potamousis K."/>
            <person name="Apodaca J."/>
            <person name="Anantharaman T.S."/>
            <person name="Lin J."/>
            <person name="Yen G."/>
            <person name="Schwartz D.C."/>
            <person name="Welch R.A."/>
            <person name="Blattner F.R."/>
        </authorList>
    </citation>
    <scope>NUCLEOTIDE SEQUENCE [LARGE SCALE GENOMIC DNA]</scope>
    <source>
        <strain>O157:H7 / EDL933 / ATCC 700927 / EHEC</strain>
    </source>
</reference>
<reference key="2">
    <citation type="journal article" date="2001" name="DNA Res.">
        <title>Complete genome sequence of enterohemorrhagic Escherichia coli O157:H7 and genomic comparison with a laboratory strain K-12.</title>
        <authorList>
            <person name="Hayashi T."/>
            <person name="Makino K."/>
            <person name="Ohnishi M."/>
            <person name="Kurokawa K."/>
            <person name="Ishii K."/>
            <person name="Yokoyama K."/>
            <person name="Han C.-G."/>
            <person name="Ohtsubo E."/>
            <person name="Nakayama K."/>
            <person name="Murata T."/>
            <person name="Tanaka M."/>
            <person name="Tobe T."/>
            <person name="Iida T."/>
            <person name="Takami H."/>
            <person name="Honda T."/>
            <person name="Sasakawa C."/>
            <person name="Ogasawara N."/>
            <person name="Yasunaga T."/>
            <person name="Kuhara S."/>
            <person name="Shiba T."/>
            <person name="Hattori M."/>
            <person name="Shinagawa H."/>
        </authorList>
    </citation>
    <scope>NUCLEOTIDE SEQUENCE [LARGE SCALE GENOMIC DNA]</scope>
    <source>
        <strain>O157:H7 / Sakai / RIMD 0509952 / EHEC</strain>
    </source>
</reference>
<name>GHXP_ECO57</name>
<keyword id="KW-0997">Cell inner membrane</keyword>
<keyword id="KW-1003">Cell membrane</keyword>
<keyword id="KW-0472">Membrane</keyword>
<keyword id="KW-1185">Reference proteome</keyword>
<keyword id="KW-0812">Transmembrane</keyword>
<keyword id="KW-1133">Transmembrane helix</keyword>
<keyword id="KW-0813">Transport</keyword>
<protein>
    <recommendedName>
        <fullName>Guanine/hypoxanthine permease GhxP</fullName>
    </recommendedName>
</protein>
<accession>P0AF53</accession>
<accession>P32702</accession>
<sequence length="449" mass="45711">MSTPSARTGGSLDAWFKISQRGSTVRQEVVAGLTTFLAMVYSVIVVPGMLGKAGFPPAAVFVATCLVAGLGSIVMGLWANLPLAIGCAISLTAFTAFSLVLGQHISVPVALGAVFLMGVLFTVISATGIRSWILRNLPHGVAHGTGIGIGLFLLLIAANGVGLVIKNPLDGLPVALGDFATFPVIMSLVGLAVIIGLEKLKVPGGILLTIIGISIVGLIFDPNVHFSGVFAMPSLSDENGNSLIGSLDIMGALNPVVLPSVLALVMTAVFDATGTIRAVAGQANLLDKDGQIIDGGKALTTDSMSSVFSGLVGAAPAAVYIESAAGTAAGGKTGLTAITVGVLFLLILFLSPLSYLVPGYATAPALMYVGLLMLSNVAKIDFADFVDAMAGLVTAVFIVLTCNIVTGIMIGFATLVIGRLVSGEWRKLNIGTVVIAVALVTFYAGGWAI</sequence>
<evidence type="ECO:0000250" key="1"/>
<evidence type="ECO:0000255" key="2"/>
<evidence type="ECO:0000305" key="3"/>
<dbReference type="EMBL" id="AE005174">
    <property type="protein sequence ID" value="AAG59262.1"/>
    <property type="molecule type" value="Genomic_DNA"/>
</dbReference>
<dbReference type="EMBL" id="BA000007">
    <property type="protein sequence ID" value="BAB38469.1"/>
    <property type="molecule type" value="Genomic_DNA"/>
</dbReference>
<dbReference type="PIR" id="B86100">
    <property type="entry name" value="B86100"/>
</dbReference>
<dbReference type="PIR" id="F91259">
    <property type="entry name" value="F91259"/>
</dbReference>
<dbReference type="RefSeq" id="WP_000106882.1">
    <property type="nucleotide sequence ID" value="NZ_VOAI01000008.1"/>
</dbReference>
<dbReference type="SMR" id="P0AF53"/>
<dbReference type="STRING" id="155864.Z5663"/>
<dbReference type="GeneID" id="93777765"/>
<dbReference type="KEGG" id="ece:Z5663"/>
<dbReference type="KEGG" id="ecs:ECs_5046"/>
<dbReference type="PATRIC" id="fig|386585.9.peg.5270"/>
<dbReference type="eggNOG" id="COG2252">
    <property type="taxonomic scope" value="Bacteria"/>
</dbReference>
<dbReference type="HOGENOM" id="CLU_024508_0_1_6"/>
<dbReference type="OMA" id="TGVRQWV"/>
<dbReference type="Proteomes" id="UP000000558">
    <property type="component" value="Chromosome"/>
</dbReference>
<dbReference type="Proteomes" id="UP000002519">
    <property type="component" value="Chromosome"/>
</dbReference>
<dbReference type="GO" id="GO:0005886">
    <property type="term" value="C:plasma membrane"/>
    <property type="evidence" value="ECO:0007669"/>
    <property type="project" value="UniProtKB-SubCell"/>
</dbReference>
<dbReference type="GO" id="GO:0015208">
    <property type="term" value="F:guanine transmembrane transporter activity"/>
    <property type="evidence" value="ECO:0007669"/>
    <property type="project" value="TreeGrafter"/>
</dbReference>
<dbReference type="InterPro" id="IPR045018">
    <property type="entry name" value="Azg-like"/>
</dbReference>
<dbReference type="InterPro" id="IPR006043">
    <property type="entry name" value="NCS2"/>
</dbReference>
<dbReference type="PANTHER" id="PTHR43337:SF5">
    <property type="entry name" value="GUANINE_HYPOXANTHINE PERMEASE GHXP"/>
    <property type="match status" value="1"/>
</dbReference>
<dbReference type="PANTHER" id="PTHR43337">
    <property type="entry name" value="XANTHINE/URACIL PERMEASE C887.17-RELATED"/>
    <property type="match status" value="1"/>
</dbReference>
<dbReference type="Pfam" id="PF00860">
    <property type="entry name" value="Xan_ur_permease"/>
    <property type="match status" value="1"/>
</dbReference>
<proteinExistence type="inferred from homology"/>